<keyword id="KW-0030">Aminoacyl-tRNA synthetase</keyword>
<keyword id="KW-0067">ATP-binding</keyword>
<keyword id="KW-0963">Cytoplasm</keyword>
<keyword id="KW-0436">Ligase</keyword>
<keyword id="KW-0460">Magnesium</keyword>
<keyword id="KW-0479">Metal-binding</keyword>
<keyword id="KW-0547">Nucleotide-binding</keyword>
<keyword id="KW-0648">Protein biosynthesis</keyword>
<dbReference type="EC" id="6.1.1.6" evidence="1"/>
<dbReference type="EMBL" id="CP000942">
    <property type="protein sequence ID" value="ACA33215.1"/>
    <property type="molecule type" value="Genomic_DNA"/>
</dbReference>
<dbReference type="RefSeq" id="WP_006688759.1">
    <property type="nucleotide sequence ID" value="NC_010503.1"/>
</dbReference>
<dbReference type="SMR" id="B1AI47"/>
<dbReference type="GeneID" id="29672283"/>
<dbReference type="KEGG" id="upa:UPA3_0061"/>
<dbReference type="HOGENOM" id="CLU_008255_6_0_14"/>
<dbReference type="Proteomes" id="UP000002162">
    <property type="component" value="Chromosome"/>
</dbReference>
<dbReference type="GO" id="GO:0005829">
    <property type="term" value="C:cytosol"/>
    <property type="evidence" value="ECO:0007669"/>
    <property type="project" value="TreeGrafter"/>
</dbReference>
<dbReference type="GO" id="GO:0005524">
    <property type="term" value="F:ATP binding"/>
    <property type="evidence" value="ECO:0007669"/>
    <property type="project" value="UniProtKB-UniRule"/>
</dbReference>
<dbReference type="GO" id="GO:0004824">
    <property type="term" value="F:lysine-tRNA ligase activity"/>
    <property type="evidence" value="ECO:0007669"/>
    <property type="project" value="UniProtKB-UniRule"/>
</dbReference>
<dbReference type="GO" id="GO:0000287">
    <property type="term" value="F:magnesium ion binding"/>
    <property type="evidence" value="ECO:0007669"/>
    <property type="project" value="UniProtKB-UniRule"/>
</dbReference>
<dbReference type="GO" id="GO:0000049">
    <property type="term" value="F:tRNA binding"/>
    <property type="evidence" value="ECO:0007669"/>
    <property type="project" value="TreeGrafter"/>
</dbReference>
<dbReference type="GO" id="GO:0006430">
    <property type="term" value="P:lysyl-tRNA aminoacylation"/>
    <property type="evidence" value="ECO:0007669"/>
    <property type="project" value="UniProtKB-UniRule"/>
</dbReference>
<dbReference type="CDD" id="cd00775">
    <property type="entry name" value="LysRS_core"/>
    <property type="match status" value="1"/>
</dbReference>
<dbReference type="CDD" id="cd04322">
    <property type="entry name" value="LysRS_N"/>
    <property type="match status" value="1"/>
</dbReference>
<dbReference type="Gene3D" id="3.30.930.10">
    <property type="entry name" value="Bira Bifunctional Protein, Domain 2"/>
    <property type="match status" value="1"/>
</dbReference>
<dbReference type="Gene3D" id="2.40.50.140">
    <property type="entry name" value="Nucleic acid-binding proteins"/>
    <property type="match status" value="1"/>
</dbReference>
<dbReference type="HAMAP" id="MF_00252">
    <property type="entry name" value="Lys_tRNA_synth_class2"/>
    <property type="match status" value="1"/>
</dbReference>
<dbReference type="InterPro" id="IPR004364">
    <property type="entry name" value="Aa-tRNA-synt_II"/>
</dbReference>
<dbReference type="InterPro" id="IPR006195">
    <property type="entry name" value="aa-tRNA-synth_II"/>
</dbReference>
<dbReference type="InterPro" id="IPR045864">
    <property type="entry name" value="aa-tRNA-synth_II/BPL/LPL"/>
</dbReference>
<dbReference type="InterPro" id="IPR002313">
    <property type="entry name" value="Lys-tRNA-ligase_II"/>
</dbReference>
<dbReference type="InterPro" id="IPR044136">
    <property type="entry name" value="Lys-tRNA-ligase_II_N"/>
</dbReference>
<dbReference type="InterPro" id="IPR018149">
    <property type="entry name" value="Lys-tRNA-synth_II_C"/>
</dbReference>
<dbReference type="InterPro" id="IPR012340">
    <property type="entry name" value="NA-bd_OB-fold"/>
</dbReference>
<dbReference type="InterPro" id="IPR004365">
    <property type="entry name" value="NA-bd_OB_tRNA"/>
</dbReference>
<dbReference type="NCBIfam" id="TIGR00499">
    <property type="entry name" value="lysS_bact"/>
    <property type="match status" value="1"/>
</dbReference>
<dbReference type="NCBIfam" id="NF001756">
    <property type="entry name" value="PRK00484.1"/>
    <property type="match status" value="1"/>
</dbReference>
<dbReference type="PANTHER" id="PTHR42918:SF15">
    <property type="entry name" value="LYSINE--TRNA LIGASE, CHLOROPLASTIC_MITOCHONDRIAL"/>
    <property type="match status" value="1"/>
</dbReference>
<dbReference type="PANTHER" id="PTHR42918">
    <property type="entry name" value="LYSYL-TRNA SYNTHETASE"/>
    <property type="match status" value="1"/>
</dbReference>
<dbReference type="Pfam" id="PF00152">
    <property type="entry name" value="tRNA-synt_2"/>
    <property type="match status" value="1"/>
</dbReference>
<dbReference type="Pfam" id="PF01336">
    <property type="entry name" value="tRNA_anti-codon"/>
    <property type="match status" value="1"/>
</dbReference>
<dbReference type="PRINTS" id="PR00982">
    <property type="entry name" value="TRNASYNTHLYS"/>
</dbReference>
<dbReference type="SUPFAM" id="SSF55681">
    <property type="entry name" value="Class II aaRS and biotin synthetases"/>
    <property type="match status" value="1"/>
</dbReference>
<dbReference type="SUPFAM" id="SSF50249">
    <property type="entry name" value="Nucleic acid-binding proteins"/>
    <property type="match status" value="1"/>
</dbReference>
<dbReference type="PROSITE" id="PS50862">
    <property type="entry name" value="AA_TRNA_LIGASE_II"/>
    <property type="match status" value="1"/>
</dbReference>
<proteinExistence type="inferred from homology"/>
<organism>
    <name type="scientific">Ureaplasma parvum serovar 3 (strain ATCC 27815 / 27 / NCTC 11736)</name>
    <dbReference type="NCBI Taxonomy" id="505682"/>
    <lineage>
        <taxon>Bacteria</taxon>
        <taxon>Bacillati</taxon>
        <taxon>Mycoplasmatota</taxon>
        <taxon>Mycoplasmoidales</taxon>
        <taxon>Mycoplasmoidaceae</taxon>
        <taxon>Ureaplasma</taxon>
    </lineage>
</organism>
<reference key="1">
    <citation type="submission" date="2008-02" db="EMBL/GenBank/DDBJ databases">
        <title>Genome sequence of Ureaplasma parvum serovar 3.</title>
        <authorList>
            <person name="Methe B.A."/>
            <person name="Glass J."/>
            <person name="Waites K."/>
            <person name="Shrivastava S."/>
        </authorList>
    </citation>
    <scope>NUCLEOTIDE SEQUENCE [LARGE SCALE GENOMIC DNA]</scope>
    <source>
        <strain>ATCC 27815 / 27 / NCTC 11736</strain>
    </source>
</reference>
<protein>
    <recommendedName>
        <fullName evidence="1">Lysine--tRNA ligase</fullName>
        <ecNumber evidence="1">6.1.1.6</ecNumber>
    </recommendedName>
    <alternativeName>
        <fullName evidence="1">Lysyl-tRNA synthetase</fullName>
        <shortName evidence="1">LysRS</shortName>
    </alternativeName>
</protein>
<feature type="chain" id="PRO_1000078514" description="Lysine--tRNA ligase">
    <location>
        <begin position="1"/>
        <end position="493"/>
    </location>
</feature>
<feature type="binding site" evidence="1">
    <location>
        <position position="402"/>
    </location>
    <ligand>
        <name>Mg(2+)</name>
        <dbReference type="ChEBI" id="CHEBI:18420"/>
        <label>1</label>
    </ligand>
</feature>
<feature type="binding site" evidence="1">
    <location>
        <position position="409"/>
    </location>
    <ligand>
        <name>Mg(2+)</name>
        <dbReference type="ChEBI" id="CHEBI:18420"/>
        <label>1</label>
    </ligand>
</feature>
<feature type="binding site" evidence="1">
    <location>
        <position position="409"/>
    </location>
    <ligand>
        <name>Mg(2+)</name>
        <dbReference type="ChEBI" id="CHEBI:18420"/>
        <label>2</label>
    </ligand>
</feature>
<evidence type="ECO:0000255" key="1">
    <source>
        <dbReference type="HAMAP-Rule" id="MF_00252"/>
    </source>
</evidence>
<name>SYK_UREP2</name>
<sequence length="493" mass="57303">MERKFSDQELIRRTHLQELKNQNKNPFLITKVDRSMFLKDFAEKYKNFSKEELHNMDLEKLTLAGRLIGIRQTFGIIQDFSAKLQIYINKKNVAPEVFSTFKSLDIGDIIELEGVAMKTNSDEITLNVTNIRLVAKSLKVLPEKYHGLVDEEIKARQRYLDLIVNDETKNTFIKRSLIIREMRNWLDNKGFFEVETPVLQDILSGAAARPFITHHNTLNKEYYLRIATEIALKKCIIGGFEKVYEIGRIFRNEGMDSTHNPEFTSVELYIAYVDLWYIMQLTEDLIRHIATKLNLLNPTFRGFSIDLNKPFKKAHMVDLINEYVGVNFFEVKSDEQAIELAKKHHVKLLDHQKNFGHIVNAFFETFVEEKLVEPTFVYGHPLQVSPLTKKNQSDPRFVDRFELFICQKEFANAYSEINDPIDQYERFIAQLEEAKLGNDEASELDMEFIEALEYGMPPTGGLGIGVDRLVMLLTSNDSIRNVLLFPHMKDKTK</sequence>
<gene>
    <name evidence="1" type="primary">lysS</name>
    <name type="ordered locus">UPA3_0061</name>
</gene>
<accession>B1AI47</accession>
<comment type="catalytic activity">
    <reaction evidence="1">
        <text>tRNA(Lys) + L-lysine + ATP = L-lysyl-tRNA(Lys) + AMP + diphosphate</text>
        <dbReference type="Rhea" id="RHEA:20792"/>
        <dbReference type="Rhea" id="RHEA-COMP:9696"/>
        <dbReference type="Rhea" id="RHEA-COMP:9697"/>
        <dbReference type="ChEBI" id="CHEBI:30616"/>
        <dbReference type="ChEBI" id="CHEBI:32551"/>
        <dbReference type="ChEBI" id="CHEBI:33019"/>
        <dbReference type="ChEBI" id="CHEBI:78442"/>
        <dbReference type="ChEBI" id="CHEBI:78529"/>
        <dbReference type="ChEBI" id="CHEBI:456215"/>
        <dbReference type="EC" id="6.1.1.6"/>
    </reaction>
</comment>
<comment type="cofactor">
    <cofactor evidence="1">
        <name>Mg(2+)</name>
        <dbReference type="ChEBI" id="CHEBI:18420"/>
    </cofactor>
    <text evidence="1">Binds 3 Mg(2+) ions per subunit.</text>
</comment>
<comment type="subunit">
    <text evidence="1">Homodimer.</text>
</comment>
<comment type="subcellular location">
    <subcellularLocation>
        <location evidence="1">Cytoplasm</location>
    </subcellularLocation>
</comment>
<comment type="similarity">
    <text evidence="1">Belongs to the class-II aminoacyl-tRNA synthetase family.</text>
</comment>